<reference key="1">
    <citation type="journal article" date="2004" name="Proc. Natl. Acad. Sci. U.S.A.">
        <title>The complete genomic sequence of Nocardia farcinica IFM 10152.</title>
        <authorList>
            <person name="Ishikawa J."/>
            <person name="Yamashita A."/>
            <person name="Mikami Y."/>
            <person name="Hoshino Y."/>
            <person name="Kurita H."/>
            <person name="Hotta K."/>
            <person name="Shiba T."/>
            <person name="Hattori M."/>
        </authorList>
    </citation>
    <scope>NUCLEOTIDE SEQUENCE [LARGE SCALE GENOMIC DNA]</scope>
    <source>
        <strain>IFM 10152</strain>
    </source>
</reference>
<evidence type="ECO:0000255" key="1">
    <source>
        <dbReference type="HAMAP-Rule" id="MF_00075"/>
    </source>
</evidence>
<protein>
    <recommendedName>
        <fullName evidence="1">Translation initiation factor IF-1</fullName>
    </recommendedName>
</protein>
<proteinExistence type="inferred from homology"/>
<name>IF1_NOCFA</name>
<dbReference type="EMBL" id="AP006618">
    <property type="protein sequence ID" value="BAD55677.1"/>
    <property type="molecule type" value="Genomic_DNA"/>
</dbReference>
<dbReference type="RefSeq" id="WP_003418601.1">
    <property type="nucleotide sequence ID" value="NC_006361.1"/>
</dbReference>
<dbReference type="SMR" id="Q5Z1L4"/>
<dbReference type="STRING" id="247156.NFA_8320"/>
<dbReference type="GeneID" id="98799387"/>
<dbReference type="KEGG" id="nfa:NFA_8320"/>
<dbReference type="eggNOG" id="COG0361">
    <property type="taxonomic scope" value="Bacteria"/>
</dbReference>
<dbReference type="HOGENOM" id="CLU_151267_1_0_11"/>
<dbReference type="OrthoDB" id="9803250at2"/>
<dbReference type="Proteomes" id="UP000006820">
    <property type="component" value="Chromosome"/>
</dbReference>
<dbReference type="GO" id="GO:0005829">
    <property type="term" value="C:cytosol"/>
    <property type="evidence" value="ECO:0007669"/>
    <property type="project" value="TreeGrafter"/>
</dbReference>
<dbReference type="GO" id="GO:0043022">
    <property type="term" value="F:ribosome binding"/>
    <property type="evidence" value="ECO:0007669"/>
    <property type="project" value="UniProtKB-UniRule"/>
</dbReference>
<dbReference type="GO" id="GO:0019843">
    <property type="term" value="F:rRNA binding"/>
    <property type="evidence" value="ECO:0007669"/>
    <property type="project" value="UniProtKB-UniRule"/>
</dbReference>
<dbReference type="GO" id="GO:0003743">
    <property type="term" value="F:translation initiation factor activity"/>
    <property type="evidence" value="ECO:0007669"/>
    <property type="project" value="UniProtKB-UniRule"/>
</dbReference>
<dbReference type="CDD" id="cd04451">
    <property type="entry name" value="S1_IF1"/>
    <property type="match status" value="1"/>
</dbReference>
<dbReference type="FunFam" id="2.40.50.140:FF:000002">
    <property type="entry name" value="Translation initiation factor IF-1"/>
    <property type="match status" value="1"/>
</dbReference>
<dbReference type="Gene3D" id="2.40.50.140">
    <property type="entry name" value="Nucleic acid-binding proteins"/>
    <property type="match status" value="1"/>
</dbReference>
<dbReference type="HAMAP" id="MF_00075">
    <property type="entry name" value="IF_1"/>
    <property type="match status" value="1"/>
</dbReference>
<dbReference type="InterPro" id="IPR012340">
    <property type="entry name" value="NA-bd_OB-fold"/>
</dbReference>
<dbReference type="InterPro" id="IPR006196">
    <property type="entry name" value="RNA-binding_domain_S1_IF1"/>
</dbReference>
<dbReference type="InterPro" id="IPR004368">
    <property type="entry name" value="TIF_IF1"/>
</dbReference>
<dbReference type="NCBIfam" id="TIGR00008">
    <property type="entry name" value="infA"/>
    <property type="match status" value="1"/>
</dbReference>
<dbReference type="PANTHER" id="PTHR33370">
    <property type="entry name" value="TRANSLATION INITIATION FACTOR IF-1, CHLOROPLASTIC"/>
    <property type="match status" value="1"/>
</dbReference>
<dbReference type="PANTHER" id="PTHR33370:SF1">
    <property type="entry name" value="TRANSLATION INITIATION FACTOR IF-1, CHLOROPLASTIC"/>
    <property type="match status" value="1"/>
</dbReference>
<dbReference type="Pfam" id="PF01176">
    <property type="entry name" value="eIF-1a"/>
    <property type="match status" value="1"/>
</dbReference>
<dbReference type="SUPFAM" id="SSF50249">
    <property type="entry name" value="Nucleic acid-binding proteins"/>
    <property type="match status" value="1"/>
</dbReference>
<dbReference type="PROSITE" id="PS50832">
    <property type="entry name" value="S1_IF1_TYPE"/>
    <property type="match status" value="1"/>
</dbReference>
<sequence>MAKKDGAIEVEGRVVEPLPNAMFRIELENGHKVLAHISGKMRQHYIRILPEDRVVVELSPYDLSRGRIVYRYK</sequence>
<keyword id="KW-0963">Cytoplasm</keyword>
<keyword id="KW-0396">Initiation factor</keyword>
<keyword id="KW-0648">Protein biosynthesis</keyword>
<keyword id="KW-1185">Reference proteome</keyword>
<keyword id="KW-0694">RNA-binding</keyword>
<keyword id="KW-0699">rRNA-binding</keyword>
<comment type="function">
    <text evidence="1">One of the essential components for the initiation of protein synthesis. Stabilizes the binding of IF-2 and IF-3 on the 30S subunit to which N-formylmethionyl-tRNA(fMet) subsequently binds. Helps modulate mRNA selection, yielding the 30S pre-initiation complex (PIC). Upon addition of the 50S ribosomal subunit IF-1, IF-2 and IF-3 are released leaving the mature 70S translation initiation complex.</text>
</comment>
<comment type="subunit">
    <text evidence="1">Component of the 30S ribosomal translation pre-initiation complex which assembles on the 30S ribosome in the order IF-2 and IF-3, IF-1 and N-formylmethionyl-tRNA(fMet); mRNA recruitment can occur at any time during PIC assembly.</text>
</comment>
<comment type="subcellular location">
    <subcellularLocation>
        <location evidence="1">Cytoplasm</location>
    </subcellularLocation>
</comment>
<comment type="similarity">
    <text evidence="1">Belongs to the IF-1 family.</text>
</comment>
<organism>
    <name type="scientific">Nocardia farcinica (strain IFM 10152)</name>
    <dbReference type="NCBI Taxonomy" id="247156"/>
    <lineage>
        <taxon>Bacteria</taxon>
        <taxon>Bacillati</taxon>
        <taxon>Actinomycetota</taxon>
        <taxon>Actinomycetes</taxon>
        <taxon>Mycobacteriales</taxon>
        <taxon>Nocardiaceae</taxon>
        <taxon>Nocardia</taxon>
    </lineage>
</organism>
<accession>Q5Z1L4</accession>
<gene>
    <name evidence="1" type="primary">infA</name>
    <name type="ordered locus">NFA_8320</name>
</gene>
<feature type="chain" id="PRO_0000095835" description="Translation initiation factor IF-1">
    <location>
        <begin position="1"/>
        <end position="73"/>
    </location>
</feature>
<feature type="domain" description="S1-like" evidence="1">
    <location>
        <begin position="1"/>
        <end position="73"/>
    </location>
</feature>